<accession>Q08259</accession>
<accession>A0A1S0T0B1</accession>
<name>YOL18_YEAST</name>
<feature type="chain" id="PRO_0000299695" description="Uncharacterized protein YOL118C">
    <location>
        <begin position="1"/>
        <end position="102"/>
    </location>
</feature>
<proteinExistence type="predicted"/>
<organism>
    <name type="scientific">Saccharomyces cerevisiae (strain ATCC 204508 / S288c)</name>
    <name type="common">Baker's yeast</name>
    <dbReference type="NCBI Taxonomy" id="559292"/>
    <lineage>
        <taxon>Eukaryota</taxon>
        <taxon>Fungi</taxon>
        <taxon>Dikarya</taxon>
        <taxon>Ascomycota</taxon>
        <taxon>Saccharomycotina</taxon>
        <taxon>Saccharomycetes</taxon>
        <taxon>Saccharomycetales</taxon>
        <taxon>Saccharomycetaceae</taxon>
        <taxon>Saccharomyces</taxon>
    </lineage>
</organism>
<sequence length="102" mass="12270">MSFRKKKLKPPAGSQFIINDSIMSYIDRTKTLIRMIGCKNQYIKARMKDKTFFYTKQFRTAKNKFFFHLYHWEATHINVDHYICTCHPIFWGSIGQKLRRSA</sequence>
<keyword id="KW-1185">Reference proteome</keyword>
<reference key="1">
    <citation type="journal article" date="1996" name="Yeast">
        <title>DNA sequence analysis of a 10 624 bp fragment of the left arm of chromosome XV from Saccharomyces cerevisiae reveals a RNA binding protein, a mitochondrial protein, two ribosomal proteins and two new open reading frames.</title>
        <authorList>
            <person name="Lafuente M.J."/>
            <person name="Gamo F.-J."/>
            <person name="Gancedo C."/>
        </authorList>
    </citation>
    <scope>NUCLEOTIDE SEQUENCE [GENOMIC DNA]</scope>
    <source>
        <strain>ATCC 96604 / S288c / FY1679</strain>
    </source>
</reference>
<reference key="2">
    <citation type="journal article" date="1997" name="Nature">
        <title>The nucleotide sequence of Saccharomyces cerevisiae chromosome XV.</title>
        <authorList>
            <person name="Dujon B."/>
            <person name="Albermann K."/>
            <person name="Aldea M."/>
            <person name="Alexandraki D."/>
            <person name="Ansorge W."/>
            <person name="Arino J."/>
            <person name="Benes V."/>
            <person name="Bohn C."/>
            <person name="Bolotin-Fukuhara M."/>
            <person name="Bordonne R."/>
            <person name="Boyer J."/>
            <person name="Camasses A."/>
            <person name="Casamayor A."/>
            <person name="Casas C."/>
            <person name="Cheret G."/>
            <person name="Cziepluch C."/>
            <person name="Daignan-Fornier B."/>
            <person name="Dang V.-D."/>
            <person name="de Haan M."/>
            <person name="Delius H."/>
            <person name="Durand P."/>
            <person name="Fairhead C."/>
            <person name="Feldmann H."/>
            <person name="Gaillon L."/>
            <person name="Galisson F."/>
            <person name="Gamo F.-J."/>
            <person name="Gancedo C."/>
            <person name="Goffeau A."/>
            <person name="Goulding S.E."/>
            <person name="Grivell L.A."/>
            <person name="Habbig B."/>
            <person name="Hand N.J."/>
            <person name="Hani J."/>
            <person name="Hattenhorst U."/>
            <person name="Hebling U."/>
            <person name="Hernando Y."/>
            <person name="Herrero E."/>
            <person name="Heumann K."/>
            <person name="Hiesel R."/>
            <person name="Hilger F."/>
            <person name="Hofmann B."/>
            <person name="Hollenberg C.P."/>
            <person name="Hughes B."/>
            <person name="Jauniaux J.-C."/>
            <person name="Kalogeropoulos A."/>
            <person name="Katsoulou C."/>
            <person name="Kordes E."/>
            <person name="Lafuente M.J."/>
            <person name="Landt O."/>
            <person name="Louis E.J."/>
            <person name="Maarse A.C."/>
            <person name="Madania A."/>
            <person name="Mannhaupt G."/>
            <person name="Marck C."/>
            <person name="Martin R.P."/>
            <person name="Mewes H.-W."/>
            <person name="Michaux G."/>
            <person name="Paces V."/>
            <person name="Parle-McDermott A.G."/>
            <person name="Pearson B.M."/>
            <person name="Perrin A."/>
            <person name="Pettersson B."/>
            <person name="Poch O."/>
            <person name="Pohl T.M."/>
            <person name="Poirey R."/>
            <person name="Portetelle D."/>
            <person name="Pujol A."/>
            <person name="Purnelle B."/>
            <person name="Ramezani Rad M."/>
            <person name="Rechmann S."/>
            <person name="Schwager C."/>
            <person name="Schweizer M."/>
            <person name="Sor F."/>
            <person name="Sterky F."/>
            <person name="Tarassov I.A."/>
            <person name="Teodoru C."/>
            <person name="Tettelin H."/>
            <person name="Thierry A."/>
            <person name="Tobiasch E."/>
            <person name="Tzermia M."/>
            <person name="Uhlen M."/>
            <person name="Unseld M."/>
            <person name="Valens M."/>
            <person name="Vandenbol M."/>
            <person name="Vetter I."/>
            <person name="Vlcek C."/>
            <person name="Voet M."/>
            <person name="Volckaert G."/>
            <person name="Voss H."/>
            <person name="Wambutt R."/>
            <person name="Wedler H."/>
            <person name="Wiemann S."/>
            <person name="Winsor B."/>
            <person name="Wolfe K.H."/>
            <person name="Zollner A."/>
            <person name="Zumstein E."/>
            <person name="Kleine K."/>
        </authorList>
    </citation>
    <scope>NUCLEOTIDE SEQUENCE [LARGE SCALE GENOMIC DNA]</scope>
    <source>
        <strain>ATCC 204508 / S288c</strain>
    </source>
</reference>
<reference key="3">
    <citation type="journal article" date="2014" name="G3 (Bethesda)">
        <title>The reference genome sequence of Saccharomyces cerevisiae: Then and now.</title>
        <authorList>
            <person name="Engel S.R."/>
            <person name="Dietrich F.S."/>
            <person name="Fisk D.G."/>
            <person name="Binkley G."/>
            <person name="Balakrishnan R."/>
            <person name="Costanzo M.C."/>
            <person name="Dwight S.S."/>
            <person name="Hitz B.C."/>
            <person name="Karra K."/>
            <person name="Nash R.S."/>
            <person name="Weng S."/>
            <person name="Wong E.D."/>
            <person name="Lloyd P."/>
            <person name="Skrzypek M.S."/>
            <person name="Miyasato S.R."/>
            <person name="Simison M."/>
            <person name="Cherry J.M."/>
        </authorList>
    </citation>
    <scope>GENOME REANNOTATION</scope>
    <source>
        <strain>ATCC 204508 / S288c</strain>
    </source>
</reference>
<reference key="4">
    <citation type="journal article" date="2007" name="Genome Res.">
        <title>Approaching a complete repository of sequence-verified protein-encoding clones for Saccharomyces cerevisiae.</title>
        <authorList>
            <person name="Hu Y."/>
            <person name="Rolfs A."/>
            <person name="Bhullar B."/>
            <person name="Murthy T.V.S."/>
            <person name="Zhu C."/>
            <person name="Berger M.F."/>
            <person name="Camargo A.A."/>
            <person name="Kelley F."/>
            <person name="McCarron S."/>
            <person name="Jepson D."/>
            <person name="Richardson A."/>
            <person name="Raphael J."/>
            <person name="Moreira D."/>
            <person name="Taycher E."/>
            <person name="Zuo D."/>
            <person name="Mohr S."/>
            <person name="Kane M.F."/>
            <person name="Williamson J."/>
            <person name="Simpson A.J.G."/>
            <person name="Bulyk M.L."/>
            <person name="Harlow E."/>
            <person name="Marsischky G."/>
            <person name="Kolodner R.D."/>
            <person name="LaBaer J."/>
        </authorList>
    </citation>
    <scope>NUCLEOTIDE SEQUENCE [GENOMIC DNA]</scope>
    <source>
        <strain>ATCC 204508 / S288c</strain>
    </source>
</reference>
<gene>
    <name type="ordered locus">YOL118C</name>
    <name type="ORF">O0573</name>
</gene>
<protein>
    <recommendedName>
        <fullName>Uncharacterized protein YOL118C</fullName>
    </recommendedName>
</protein>
<dbReference type="EMBL" id="X95258">
    <property type="protein sequence ID" value="CAA64552.1"/>
    <property type="molecule type" value="Genomic_DNA"/>
</dbReference>
<dbReference type="EMBL" id="Z74860">
    <property type="protein sequence ID" value="CAA99137.1"/>
    <property type="molecule type" value="Genomic_DNA"/>
</dbReference>
<dbReference type="EMBL" id="AY558429">
    <property type="protein sequence ID" value="AAS56755.1"/>
    <property type="molecule type" value="Genomic_DNA"/>
</dbReference>
<dbReference type="EMBL" id="BK006948">
    <property type="protein sequence ID" value="DAA80332.1"/>
    <property type="molecule type" value="Genomic_DNA"/>
</dbReference>
<dbReference type="PIR" id="S66815">
    <property type="entry name" value="S66815"/>
</dbReference>
<dbReference type="RefSeq" id="NP_001335812.1">
    <property type="nucleotide sequence ID" value="NM_001348874.1"/>
</dbReference>
<dbReference type="DIP" id="DIP-5156N"/>
<dbReference type="FunCoup" id="Q08259">
    <property type="interactions" value="24"/>
</dbReference>
<dbReference type="IntAct" id="Q08259">
    <property type="interactions" value="1"/>
</dbReference>
<dbReference type="STRING" id="4932.YOL118C"/>
<dbReference type="PaxDb" id="4932-YOL118C"/>
<dbReference type="EnsemblFungi" id="YOL118C_mRNA">
    <property type="protein sequence ID" value="YOL118C"/>
    <property type="gene ID" value="YOL118C"/>
</dbReference>
<dbReference type="GeneID" id="854031"/>
<dbReference type="AGR" id="SGD:S000005478"/>
<dbReference type="SGD" id="S000005478">
    <property type="gene designation" value="YOL118C"/>
</dbReference>
<dbReference type="HOGENOM" id="CLU_2279677_0_0_1"/>
<dbReference type="InParanoid" id="Q08259"/>
<dbReference type="PRO" id="PR:Q08259"/>
<dbReference type="Proteomes" id="UP000002311">
    <property type="component" value="Chromosome XV"/>
</dbReference>
<dbReference type="RNAct" id="Q08259">
    <property type="molecule type" value="protein"/>
</dbReference>